<evidence type="ECO:0000255" key="1">
    <source>
        <dbReference type="HAMAP-Rule" id="MF_01633"/>
    </source>
</evidence>
<feature type="chain" id="PRO_1000088155" description="7-cyano-7-deazaguanine synthase">
    <location>
        <begin position="1"/>
        <end position="230"/>
    </location>
</feature>
<feature type="binding site" evidence="1">
    <location>
        <begin position="9"/>
        <end position="19"/>
    </location>
    <ligand>
        <name>ATP</name>
        <dbReference type="ChEBI" id="CHEBI:30616"/>
    </ligand>
</feature>
<feature type="binding site" evidence="1">
    <location>
        <position position="190"/>
    </location>
    <ligand>
        <name>Zn(2+)</name>
        <dbReference type="ChEBI" id="CHEBI:29105"/>
    </ligand>
</feature>
<feature type="binding site" evidence="1">
    <location>
        <position position="198"/>
    </location>
    <ligand>
        <name>Zn(2+)</name>
        <dbReference type="ChEBI" id="CHEBI:29105"/>
    </ligand>
</feature>
<feature type="binding site" evidence="1">
    <location>
        <position position="201"/>
    </location>
    <ligand>
        <name>Zn(2+)</name>
        <dbReference type="ChEBI" id="CHEBI:29105"/>
    </ligand>
</feature>
<feature type="binding site" evidence="1">
    <location>
        <position position="204"/>
    </location>
    <ligand>
        <name>Zn(2+)</name>
        <dbReference type="ChEBI" id="CHEBI:29105"/>
    </ligand>
</feature>
<organism>
    <name type="scientific">Microcystis aeruginosa (strain NIES-843 / IAM M-2473)</name>
    <dbReference type="NCBI Taxonomy" id="449447"/>
    <lineage>
        <taxon>Bacteria</taxon>
        <taxon>Bacillati</taxon>
        <taxon>Cyanobacteriota</taxon>
        <taxon>Cyanophyceae</taxon>
        <taxon>Oscillatoriophycideae</taxon>
        <taxon>Chroococcales</taxon>
        <taxon>Microcystaceae</taxon>
        <taxon>Microcystis</taxon>
    </lineage>
</organism>
<comment type="function">
    <text evidence="1">Catalyzes the ATP-dependent conversion of 7-carboxy-7-deazaguanine (CDG) to 7-cyano-7-deazaguanine (preQ(0)).</text>
</comment>
<comment type="catalytic activity">
    <reaction evidence="1">
        <text>7-carboxy-7-deazaguanine + NH4(+) + ATP = 7-cyano-7-deazaguanine + ADP + phosphate + H2O + H(+)</text>
        <dbReference type="Rhea" id="RHEA:27982"/>
        <dbReference type="ChEBI" id="CHEBI:15377"/>
        <dbReference type="ChEBI" id="CHEBI:15378"/>
        <dbReference type="ChEBI" id="CHEBI:28938"/>
        <dbReference type="ChEBI" id="CHEBI:30616"/>
        <dbReference type="ChEBI" id="CHEBI:43474"/>
        <dbReference type="ChEBI" id="CHEBI:45075"/>
        <dbReference type="ChEBI" id="CHEBI:61036"/>
        <dbReference type="ChEBI" id="CHEBI:456216"/>
        <dbReference type="EC" id="6.3.4.20"/>
    </reaction>
</comment>
<comment type="cofactor">
    <cofactor evidence="1">
        <name>Zn(2+)</name>
        <dbReference type="ChEBI" id="CHEBI:29105"/>
    </cofactor>
    <text evidence="1">Binds 1 zinc ion per subunit.</text>
</comment>
<comment type="pathway">
    <text evidence="1">Purine metabolism; 7-cyano-7-deazaguanine biosynthesis.</text>
</comment>
<comment type="similarity">
    <text evidence="1">Belongs to the QueC family.</text>
</comment>
<dbReference type="EC" id="6.3.4.20" evidence="1"/>
<dbReference type="EMBL" id="AP009552">
    <property type="protein sequence ID" value="BAG02404.1"/>
    <property type="molecule type" value="Genomic_DNA"/>
</dbReference>
<dbReference type="RefSeq" id="WP_002799117.1">
    <property type="nucleotide sequence ID" value="NC_010296.1"/>
</dbReference>
<dbReference type="SMR" id="B0JIA6"/>
<dbReference type="STRING" id="449447.MAE_25820"/>
<dbReference type="PaxDb" id="449447-MAE_25820"/>
<dbReference type="EnsemblBacteria" id="BAG02404">
    <property type="protein sequence ID" value="BAG02404"/>
    <property type="gene ID" value="MAE_25820"/>
</dbReference>
<dbReference type="KEGG" id="mar:MAE_25820"/>
<dbReference type="eggNOG" id="COG0603">
    <property type="taxonomic scope" value="Bacteria"/>
</dbReference>
<dbReference type="HOGENOM" id="CLU_081854_1_0_3"/>
<dbReference type="BioCyc" id="MAER449447:MAE_RS11300-MONOMER"/>
<dbReference type="UniPathway" id="UPA00391"/>
<dbReference type="Proteomes" id="UP000001510">
    <property type="component" value="Chromosome"/>
</dbReference>
<dbReference type="GO" id="GO:0005524">
    <property type="term" value="F:ATP binding"/>
    <property type="evidence" value="ECO:0007669"/>
    <property type="project" value="UniProtKB-UniRule"/>
</dbReference>
<dbReference type="GO" id="GO:0016879">
    <property type="term" value="F:ligase activity, forming carbon-nitrogen bonds"/>
    <property type="evidence" value="ECO:0007669"/>
    <property type="project" value="UniProtKB-UniRule"/>
</dbReference>
<dbReference type="GO" id="GO:0008270">
    <property type="term" value="F:zinc ion binding"/>
    <property type="evidence" value="ECO:0007669"/>
    <property type="project" value="UniProtKB-UniRule"/>
</dbReference>
<dbReference type="GO" id="GO:0008616">
    <property type="term" value="P:queuosine biosynthetic process"/>
    <property type="evidence" value="ECO:0007669"/>
    <property type="project" value="UniProtKB-UniRule"/>
</dbReference>
<dbReference type="CDD" id="cd01995">
    <property type="entry name" value="QueC-like"/>
    <property type="match status" value="1"/>
</dbReference>
<dbReference type="Gene3D" id="3.40.50.620">
    <property type="entry name" value="HUPs"/>
    <property type="match status" value="1"/>
</dbReference>
<dbReference type="HAMAP" id="MF_01633">
    <property type="entry name" value="QueC"/>
    <property type="match status" value="1"/>
</dbReference>
<dbReference type="InterPro" id="IPR018317">
    <property type="entry name" value="QueC"/>
</dbReference>
<dbReference type="InterPro" id="IPR014729">
    <property type="entry name" value="Rossmann-like_a/b/a_fold"/>
</dbReference>
<dbReference type="NCBIfam" id="TIGR00364">
    <property type="entry name" value="7-cyano-7-deazaguanine synthase QueC"/>
    <property type="match status" value="1"/>
</dbReference>
<dbReference type="PANTHER" id="PTHR42914">
    <property type="entry name" value="7-CYANO-7-DEAZAGUANINE SYNTHASE"/>
    <property type="match status" value="1"/>
</dbReference>
<dbReference type="PANTHER" id="PTHR42914:SF1">
    <property type="entry name" value="7-CYANO-7-DEAZAGUANINE SYNTHASE"/>
    <property type="match status" value="1"/>
</dbReference>
<dbReference type="Pfam" id="PF06508">
    <property type="entry name" value="QueC"/>
    <property type="match status" value="1"/>
</dbReference>
<dbReference type="PIRSF" id="PIRSF006293">
    <property type="entry name" value="ExsB"/>
    <property type="match status" value="1"/>
</dbReference>
<dbReference type="SUPFAM" id="SSF52402">
    <property type="entry name" value="Adenine nucleotide alpha hydrolases-like"/>
    <property type="match status" value="1"/>
</dbReference>
<proteinExistence type="inferred from homology"/>
<protein>
    <recommendedName>
        <fullName evidence="1">7-cyano-7-deazaguanine synthase</fullName>
        <ecNumber evidence="1">6.3.4.20</ecNumber>
    </recommendedName>
    <alternativeName>
        <fullName evidence="1">7-cyano-7-carbaguanine synthase</fullName>
    </alternativeName>
    <alternativeName>
        <fullName evidence="1">PreQ(0) synthase</fullName>
    </alternativeName>
    <alternativeName>
        <fullName evidence="1">Queuosine biosynthesis protein QueC</fullName>
    </alternativeName>
</protein>
<keyword id="KW-0067">ATP-binding</keyword>
<keyword id="KW-0436">Ligase</keyword>
<keyword id="KW-0479">Metal-binding</keyword>
<keyword id="KW-0547">Nucleotide-binding</keyword>
<keyword id="KW-0671">Queuosine biosynthesis</keyword>
<keyword id="KW-0862">Zinc</keyword>
<sequence length="230" mass="24755">MTKKAIILLSGGLDSATTAAIALAAGYQLIALSFRYGQRHERELAAAKKIANFLNIKEHHLIEVNLSLWGGSALTDQSIAIPQEGINPDIIPITYVPGRNTVFISIALSLAEAREAEAIYLGINAVDYSGYPDCRPEYLDAFQTLANLSSKAGLEGKAPQLIAPLVMDSKVDIVRRAVSLGVPIADTWSCYQGEVEPCGLCDSCRIRDQALIEAGYPELATPLLKNSRGK</sequence>
<reference key="1">
    <citation type="journal article" date="2007" name="DNA Res.">
        <title>Complete genomic structure of the bloom-forming toxic cyanobacterium Microcystis aeruginosa NIES-843.</title>
        <authorList>
            <person name="Kaneko T."/>
            <person name="Nakajima N."/>
            <person name="Okamoto S."/>
            <person name="Suzuki I."/>
            <person name="Tanabe Y."/>
            <person name="Tamaoki M."/>
            <person name="Nakamura Y."/>
            <person name="Kasai F."/>
            <person name="Watanabe A."/>
            <person name="Kawashima K."/>
            <person name="Kishida Y."/>
            <person name="Ono A."/>
            <person name="Shimizu Y."/>
            <person name="Takahashi C."/>
            <person name="Minami C."/>
            <person name="Fujishiro T."/>
            <person name="Kohara M."/>
            <person name="Katoh M."/>
            <person name="Nakazaki N."/>
            <person name="Nakayama S."/>
            <person name="Yamada M."/>
            <person name="Tabata S."/>
            <person name="Watanabe M.M."/>
        </authorList>
    </citation>
    <scope>NUCLEOTIDE SEQUENCE [LARGE SCALE GENOMIC DNA]</scope>
    <source>
        <strain>NIES-843 / IAM M-247</strain>
    </source>
</reference>
<name>QUEC_MICAN</name>
<accession>B0JIA6</accession>
<gene>
    <name evidence="1" type="primary">queC</name>
    <name type="ordered locus">MAE_25820</name>
</gene>